<organism>
    <name type="scientific">Glycine max</name>
    <name type="common">Soybean</name>
    <name type="synonym">Glycine hispida</name>
    <dbReference type="NCBI Taxonomy" id="3847"/>
    <lineage>
        <taxon>Eukaryota</taxon>
        <taxon>Viridiplantae</taxon>
        <taxon>Streptophyta</taxon>
        <taxon>Embryophyta</taxon>
        <taxon>Tracheophyta</taxon>
        <taxon>Spermatophyta</taxon>
        <taxon>Magnoliopsida</taxon>
        <taxon>eudicotyledons</taxon>
        <taxon>Gunneridae</taxon>
        <taxon>Pentapetalae</taxon>
        <taxon>rosids</taxon>
        <taxon>fabids</taxon>
        <taxon>Fabales</taxon>
        <taxon>Fabaceae</taxon>
        <taxon>Papilionoideae</taxon>
        <taxon>50 kb inversion clade</taxon>
        <taxon>NPAAA clade</taxon>
        <taxon>indigoferoid/millettioid clade</taxon>
        <taxon>Phaseoleae</taxon>
        <taxon>Glycine</taxon>
        <taxon>Glycine subgen. Soja</taxon>
    </lineage>
</organism>
<reference key="1">
    <citation type="journal article" date="1998" name="Biosci. Biotechnol. Biochem.">
        <title>Molecular cloning and expression patterns of Cu/Zn-superoxide dismutases in developing soybean seeds.</title>
        <authorList>
            <person name="Arahira M."/>
            <person name="Nong V.H."/>
            <person name="Kadokura K."/>
            <person name="Kimura K."/>
            <person name="Udaka K."/>
            <person name="Fukazawa C."/>
        </authorList>
    </citation>
    <scope>NUCLEOTIDE SEQUENCE</scope>
</reference>
<comment type="function">
    <text evidence="1">Destroys radicals which are normally produced within the cells and which are toxic to biological systems.</text>
</comment>
<comment type="catalytic activity">
    <reaction>
        <text>2 superoxide + 2 H(+) = H2O2 + O2</text>
        <dbReference type="Rhea" id="RHEA:20696"/>
        <dbReference type="ChEBI" id="CHEBI:15378"/>
        <dbReference type="ChEBI" id="CHEBI:15379"/>
        <dbReference type="ChEBI" id="CHEBI:16240"/>
        <dbReference type="ChEBI" id="CHEBI:18421"/>
        <dbReference type="EC" id="1.15.1.1"/>
    </reaction>
</comment>
<comment type="cofactor">
    <cofactor evidence="1">
        <name>Cu cation</name>
        <dbReference type="ChEBI" id="CHEBI:23378"/>
    </cofactor>
    <text evidence="1">Binds 1 copper ion per subunit.</text>
</comment>
<comment type="cofactor">
    <cofactor evidence="1">
        <name>Zn(2+)</name>
        <dbReference type="ChEBI" id="CHEBI:29105"/>
    </cofactor>
    <text evidence="1">Binds 1 zinc ion per subunit.</text>
</comment>
<comment type="subunit">
    <text evidence="1">Homodimer.</text>
</comment>
<comment type="subcellular location">
    <subcellularLocation>
        <location evidence="1">Cytoplasm</location>
    </subcellularLocation>
</comment>
<comment type="similarity">
    <text evidence="3">Belongs to the Cu-Zn superoxide dismutase family.</text>
</comment>
<evidence type="ECO:0000250" key="1"/>
<evidence type="ECO:0000256" key="2">
    <source>
        <dbReference type="SAM" id="MobiDB-lite"/>
    </source>
</evidence>
<evidence type="ECO:0000305" key="3"/>
<name>SODC_SOYBN</name>
<keyword id="KW-0049">Antioxidant</keyword>
<keyword id="KW-0186">Copper</keyword>
<keyword id="KW-0963">Cytoplasm</keyword>
<keyword id="KW-1015">Disulfide bond</keyword>
<keyword id="KW-0479">Metal-binding</keyword>
<keyword id="KW-0560">Oxidoreductase</keyword>
<keyword id="KW-1185">Reference proteome</keyword>
<keyword id="KW-0862">Zinc</keyword>
<dbReference type="EC" id="1.15.1.1"/>
<dbReference type="PIR" id="JW0084">
    <property type="entry name" value="JW0084"/>
</dbReference>
<dbReference type="RefSeq" id="NP_001235298.1">
    <property type="nucleotide sequence ID" value="NM_001248369.2"/>
</dbReference>
<dbReference type="SMR" id="Q7M1R5"/>
<dbReference type="FunCoup" id="Q7M1R5">
    <property type="interactions" value="3007"/>
</dbReference>
<dbReference type="STRING" id="3847.Q7M1R5"/>
<dbReference type="PaxDb" id="3847-GLYMA19G42890.1"/>
<dbReference type="EnsemblPlants" id="KRG96907">
    <property type="protein sequence ID" value="KRG96907"/>
    <property type="gene ID" value="GLYMA_19G240400"/>
</dbReference>
<dbReference type="EnsemblPlants" id="KRG96908">
    <property type="protein sequence ID" value="KRG96908"/>
    <property type="gene ID" value="GLYMA_19G240400"/>
</dbReference>
<dbReference type="GeneID" id="100499991"/>
<dbReference type="Gramene" id="KRG96907">
    <property type="protein sequence ID" value="KRG96907"/>
    <property type="gene ID" value="GLYMA_19G240400"/>
</dbReference>
<dbReference type="Gramene" id="KRG96908">
    <property type="protein sequence ID" value="KRG96908"/>
    <property type="gene ID" value="GLYMA_19G240400"/>
</dbReference>
<dbReference type="KEGG" id="gmx:100499991"/>
<dbReference type="eggNOG" id="KOG0441">
    <property type="taxonomic scope" value="Eukaryota"/>
</dbReference>
<dbReference type="HOGENOM" id="CLU_056632_4_1_1"/>
<dbReference type="InParanoid" id="Q7M1R5"/>
<dbReference type="OMA" id="VQVHGNV"/>
<dbReference type="OrthoDB" id="2015551at2759"/>
<dbReference type="Proteomes" id="UP000008827">
    <property type="component" value="Chromosome 19"/>
</dbReference>
<dbReference type="GO" id="GO:0005737">
    <property type="term" value="C:cytoplasm"/>
    <property type="evidence" value="ECO:0007669"/>
    <property type="project" value="UniProtKB-SubCell"/>
</dbReference>
<dbReference type="GO" id="GO:0005507">
    <property type="term" value="F:copper ion binding"/>
    <property type="evidence" value="ECO:0000318"/>
    <property type="project" value="GO_Central"/>
</dbReference>
<dbReference type="GO" id="GO:0004784">
    <property type="term" value="F:superoxide dismutase activity"/>
    <property type="evidence" value="ECO:0000318"/>
    <property type="project" value="GO_Central"/>
</dbReference>
<dbReference type="GO" id="GO:0019430">
    <property type="term" value="P:removal of superoxide radicals"/>
    <property type="evidence" value="ECO:0000318"/>
    <property type="project" value="GO_Central"/>
</dbReference>
<dbReference type="CDD" id="cd00305">
    <property type="entry name" value="Cu-Zn_Superoxide_Dismutase"/>
    <property type="match status" value="1"/>
</dbReference>
<dbReference type="FunFam" id="2.60.40.200:FF:000001">
    <property type="entry name" value="Superoxide dismutase [Cu-Zn]"/>
    <property type="match status" value="1"/>
</dbReference>
<dbReference type="Gene3D" id="2.60.40.200">
    <property type="entry name" value="Superoxide dismutase, copper/zinc binding domain"/>
    <property type="match status" value="1"/>
</dbReference>
<dbReference type="InterPro" id="IPR036423">
    <property type="entry name" value="SOD-like_Cu/Zn_dom_sf"/>
</dbReference>
<dbReference type="InterPro" id="IPR024134">
    <property type="entry name" value="SOD_Cu/Zn_/chaperone"/>
</dbReference>
<dbReference type="InterPro" id="IPR018152">
    <property type="entry name" value="SOD_Cu/Zn_BS"/>
</dbReference>
<dbReference type="InterPro" id="IPR001424">
    <property type="entry name" value="SOD_Cu_Zn_dom"/>
</dbReference>
<dbReference type="PANTHER" id="PTHR10003">
    <property type="entry name" value="SUPEROXIDE DISMUTASE CU-ZN -RELATED"/>
    <property type="match status" value="1"/>
</dbReference>
<dbReference type="Pfam" id="PF00080">
    <property type="entry name" value="Sod_Cu"/>
    <property type="match status" value="1"/>
</dbReference>
<dbReference type="PRINTS" id="PR00068">
    <property type="entry name" value="CUZNDISMTASE"/>
</dbReference>
<dbReference type="SUPFAM" id="SSF49329">
    <property type="entry name" value="Cu,Zn superoxide dismutase-like"/>
    <property type="match status" value="1"/>
</dbReference>
<dbReference type="PROSITE" id="PS00087">
    <property type="entry name" value="SOD_CU_ZN_1"/>
    <property type="match status" value="1"/>
</dbReference>
<dbReference type="PROSITE" id="PS00332">
    <property type="entry name" value="SOD_CU_ZN_2"/>
    <property type="match status" value="1"/>
</dbReference>
<gene>
    <name type="primary">SOD1</name>
</gene>
<accession>Q7M1R5</accession>
<proteinExistence type="inferred from homology"/>
<sequence>MVKAVAVLGSSEGVTGTIFFTQEGNGPTTVTGSLAGLKPGLHGFHVHALGDTTNGCLSTGAHFNPNNNEHGAPEDENRHAGDLGNVNVGDDGTVSFSITDSQIPLTGPNSIIGRAVVVHADSDDLGKGGHELSKTTGNAGGRVACGIIGLQG</sequence>
<protein>
    <recommendedName>
        <fullName>Superoxide dismutase [Cu-Zn]</fullName>
        <ecNumber>1.15.1.1</ecNumber>
    </recommendedName>
</protein>
<feature type="chain" id="PRO_0000164156" description="Superoxide dismutase [Cu-Zn]">
    <location>
        <begin position="1"/>
        <end position="152"/>
    </location>
</feature>
<feature type="region of interest" description="Disordered" evidence="2">
    <location>
        <begin position="62"/>
        <end position="82"/>
    </location>
</feature>
<feature type="compositionally biased region" description="Basic and acidic residues" evidence="2">
    <location>
        <begin position="71"/>
        <end position="81"/>
    </location>
</feature>
<feature type="binding site" evidence="1">
    <location>
        <position position="45"/>
    </location>
    <ligand>
        <name>Cu cation</name>
        <dbReference type="ChEBI" id="CHEBI:23378"/>
        <note>catalytic</note>
    </ligand>
</feature>
<feature type="binding site" evidence="1">
    <location>
        <position position="47"/>
    </location>
    <ligand>
        <name>Cu cation</name>
        <dbReference type="ChEBI" id="CHEBI:23378"/>
        <note>catalytic</note>
    </ligand>
</feature>
<feature type="binding site" evidence="1">
    <location>
        <position position="62"/>
    </location>
    <ligand>
        <name>Cu cation</name>
        <dbReference type="ChEBI" id="CHEBI:23378"/>
        <note>catalytic</note>
    </ligand>
</feature>
<feature type="binding site" evidence="1">
    <location>
        <position position="62"/>
    </location>
    <ligand>
        <name>Zn(2+)</name>
        <dbReference type="ChEBI" id="CHEBI:29105"/>
        <note>structural</note>
    </ligand>
</feature>
<feature type="binding site" evidence="1">
    <location>
        <position position="70"/>
    </location>
    <ligand>
        <name>Zn(2+)</name>
        <dbReference type="ChEBI" id="CHEBI:29105"/>
        <note>structural</note>
    </ligand>
</feature>
<feature type="binding site" evidence="1">
    <location>
        <position position="79"/>
    </location>
    <ligand>
        <name>Zn(2+)</name>
        <dbReference type="ChEBI" id="CHEBI:29105"/>
        <note>structural</note>
    </ligand>
</feature>
<feature type="binding site" evidence="1">
    <location>
        <position position="82"/>
    </location>
    <ligand>
        <name>Zn(2+)</name>
        <dbReference type="ChEBI" id="CHEBI:29105"/>
        <note>structural</note>
    </ligand>
</feature>
<feature type="binding site" evidence="1">
    <location>
        <position position="119"/>
    </location>
    <ligand>
        <name>Cu cation</name>
        <dbReference type="ChEBI" id="CHEBI:23378"/>
        <note>catalytic</note>
    </ligand>
</feature>
<feature type="disulfide bond" evidence="1">
    <location>
        <begin position="56"/>
        <end position="145"/>
    </location>
</feature>